<name>CISY_RICC1</name>
<proteinExistence type="inferred from homology"/>
<dbReference type="EC" id="2.3.3.16"/>
<dbReference type="EMBL" id="U59728">
    <property type="protein sequence ID" value="AAB02951.1"/>
    <property type="molecule type" value="Genomic_DNA"/>
</dbReference>
<dbReference type="SMR" id="Q59136"/>
<dbReference type="UniPathway" id="UPA00223">
    <property type="reaction ID" value="UER00717"/>
</dbReference>
<dbReference type="GO" id="GO:0005737">
    <property type="term" value="C:cytoplasm"/>
    <property type="evidence" value="ECO:0007669"/>
    <property type="project" value="InterPro"/>
</dbReference>
<dbReference type="GO" id="GO:0004108">
    <property type="term" value="F:citrate (Si)-synthase activity"/>
    <property type="evidence" value="ECO:0007669"/>
    <property type="project" value="InterPro"/>
</dbReference>
<dbReference type="GO" id="GO:0006099">
    <property type="term" value="P:tricarboxylic acid cycle"/>
    <property type="evidence" value="ECO:0007669"/>
    <property type="project" value="UniProtKB-UniPathway"/>
</dbReference>
<dbReference type="CDD" id="cd06114">
    <property type="entry name" value="EcCS_like"/>
    <property type="match status" value="1"/>
</dbReference>
<dbReference type="FunFam" id="1.10.230.10:FF:000002">
    <property type="entry name" value="Citrate synthase"/>
    <property type="match status" value="1"/>
</dbReference>
<dbReference type="Gene3D" id="2.20.28.60">
    <property type="match status" value="1"/>
</dbReference>
<dbReference type="Gene3D" id="1.10.580.10">
    <property type="entry name" value="Citrate Synthase, domain 1"/>
    <property type="match status" value="1"/>
</dbReference>
<dbReference type="Gene3D" id="1.10.230.10">
    <property type="entry name" value="Cytochrome P450-Terp, domain 2"/>
    <property type="match status" value="1"/>
</dbReference>
<dbReference type="InterPro" id="IPR016142">
    <property type="entry name" value="Citrate_synth-like_lrg_a-sub"/>
</dbReference>
<dbReference type="InterPro" id="IPR016143">
    <property type="entry name" value="Citrate_synth-like_sm_a-sub"/>
</dbReference>
<dbReference type="InterPro" id="IPR002020">
    <property type="entry name" value="Citrate_synthase"/>
</dbReference>
<dbReference type="InterPro" id="IPR019810">
    <property type="entry name" value="Citrate_synthase_AS"/>
</dbReference>
<dbReference type="InterPro" id="IPR024176">
    <property type="entry name" value="Citrate_synthase_bac-typ"/>
</dbReference>
<dbReference type="InterPro" id="IPR036969">
    <property type="entry name" value="Citrate_synthase_sf"/>
</dbReference>
<dbReference type="InterPro" id="IPR010953">
    <property type="entry name" value="Citrate_synthase_typ-I"/>
</dbReference>
<dbReference type="NCBIfam" id="TIGR01798">
    <property type="entry name" value="cit_synth_I"/>
    <property type="match status" value="1"/>
</dbReference>
<dbReference type="NCBIfam" id="NF004126">
    <property type="entry name" value="PRK05614.1"/>
    <property type="match status" value="1"/>
</dbReference>
<dbReference type="PANTHER" id="PTHR42871">
    <property type="entry name" value="CITRATE SYNTHASE"/>
    <property type="match status" value="1"/>
</dbReference>
<dbReference type="PANTHER" id="PTHR42871:SF1">
    <property type="entry name" value="CITRATE SYNTHASE"/>
    <property type="match status" value="1"/>
</dbReference>
<dbReference type="Pfam" id="PF00285">
    <property type="entry name" value="Citrate_synt"/>
    <property type="match status" value="1"/>
</dbReference>
<dbReference type="PIRSF" id="PIRSF001369">
    <property type="entry name" value="Citrate_synth"/>
    <property type="match status" value="1"/>
</dbReference>
<dbReference type="PRINTS" id="PR00143">
    <property type="entry name" value="CITRTSNTHASE"/>
</dbReference>
<dbReference type="SUPFAM" id="SSF48256">
    <property type="entry name" value="Citrate synthase"/>
    <property type="match status" value="1"/>
</dbReference>
<dbReference type="PROSITE" id="PS00480">
    <property type="entry name" value="CITRATE_SYNTHASE"/>
    <property type="match status" value="1"/>
</dbReference>
<feature type="chain" id="PRO_0000169926" description="Citrate synthase">
    <location>
        <begin position="1" status="less than"/>
        <end position="411" status="greater than"/>
    </location>
</feature>
<feature type="active site" evidence="1">
    <location>
        <position position="304"/>
    </location>
</feature>
<feature type="active site" evidence="1">
    <location>
        <position position="363"/>
    </location>
</feature>
<feature type="non-terminal residue">
    <location>
        <position position="1"/>
    </location>
</feature>
<feature type="non-terminal residue">
    <location>
        <position position="411"/>
    </location>
</feature>
<organism>
    <name type="scientific">Rickettsia conorii subsp. caspia (strain A-167)</name>
    <name type="common">Astrakhan rickettsia</name>
    <dbReference type="NCBI Taxonomy" id="140892"/>
    <lineage>
        <taxon>Bacteria</taxon>
        <taxon>Pseudomonadati</taxon>
        <taxon>Pseudomonadota</taxon>
        <taxon>Alphaproteobacteria</taxon>
        <taxon>Rickettsiales</taxon>
        <taxon>Rickettsiaceae</taxon>
        <taxon>Rickettsieae</taxon>
        <taxon>Rickettsia</taxon>
        <taxon>spotted fever group</taxon>
    </lineage>
</organism>
<keyword id="KW-0808">Transferase</keyword>
<keyword id="KW-0816">Tricarboxylic acid cycle</keyword>
<gene>
    <name type="primary">gltA</name>
</gene>
<protein>
    <recommendedName>
        <fullName>Citrate synthase</fullName>
        <ecNumber>2.3.3.16</ecNumber>
    </recommendedName>
</protein>
<accession>Q59136</accession>
<comment type="catalytic activity">
    <reaction evidence="1">
        <text>oxaloacetate + acetyl-CoA + H2O = citrate + CoA + H(+)</text>
        <dbReference type="Rhea" id="RHEA:16845"/>
        <dbReference type="ChEBI" id="CHEBI:15377"/>
        <dbReference type="ChEBI" id="CHEBI:15378"/>
        <dbReference type="ChEBI" id="CHEBI:16452"/>
        <dbReference type="ChEBI" id="CHEBI:16947"/>
        <dbReference type="ChEBI" id="CHEBI:57287"/>
        <dbReference type="ChEBI" id="CHEBI:57288"/>
        <dbReference type="EC" id="2.3.3.16"/>
    </reaction>
</comment>
<comment type="pathway">
    <text>Carbohydrate metabolism; tricarboxylic acid cycle; isocitrate from oxaloacetate: step 1/2.</text>
</comment>
<comment type="miscellaneous">
    <text>Citrate synthase is found in nearly all cells capable of oxidative metabolism.</text>
</comment>
<comment type="similarity">
    <text evidence="2">Belongs to the citrate synthase family.</text>
</comment>
<evidence type="ECO:0000255" key="1">
    <source>
        <dbReference type="PROSITE-ProRule" id="PRU10117"/>
    </source>
</evidence>
<evidence type="ECO:0000305" key="2"/>
<reference key="1">
    <citation type="journal article" date="1997" name="Int. J. Syst. Bacteriol.">
        <title>Citrate synthase gene comparison, a new tool for phylogenetic analysis, and its application for the rickettsiae.</title>
        <authorList>
            <person name="Roux V."/>
            <person name="Rydkina E."/>
            <person name="Eremeeva M."/>
            <person name="Raoult D."/>
        </authorList>
    </citation>
    <scope>NUCLEOTIDE SEQUENCE [GENOMIC DNA]</scope>
    <source>
        <strain>A-167</strain>
    </source>
</reference>
<sequence length="411" mass="46160">DSEFAELKIRGKIFKLPILKASIGEDVIDISRVSAEADCFTYDPGFMSTASCQSTITYIDGDKGILRHRGYDIKDLAEKSDFLEVAYLLIYGELPSGEQYNNFTKQVAHHSLVNERLHYLFQTFCSSSHPMAIMLAAVGSLSAFYPDLLNFKEADYELTAIRMIAKIPTIAAMSYKYSIGQPFIYPDNPLDFTENFLHMMFATPCTKYTVNPIIKNALNKIFILHADHEQNASTSTVRIAGSSGANPFACISTGIASLWGPAHGGANEAVINMLKEIGSSEYIPKYIAKAKDKNDPFRLMGFGHRVYKNYDPRAAVLKETCKEVLKALGQLDNNPLLQIAIELEAIALKDEYFIERKLYPNVDFYSGIIYKAMGIPSQMFTVLFAIARTVGWMAQWKEMHEDPEQKISRPR</sequence>